<sequence length="115" mass="13130">MSNIIKQLEQEQMKQNVPSFRPGDTVEVKVWVVEGTKKRLQAFEGVVIAIRNRGLHSAFTVRKISNGEGVERVFQTHSPVVDSIAVKRRGAVRKAKLYYLRERTGKAARIKERLN</sequence>
<organism>
    <name type="scientific">Salmonella gallinarum (strain 287/91 / NCTC 13346)</name>
    <dbReference type="NCBI Taxonomy" id="550538"/>
    <lineage>
        <taxon>Bacteria</taxon>
        <taxon>Pseudomonadati</taxon>
        <taxon>Pseudomonadota</taxon>
        <taxon>Gammaproteobacteria</taxon>
        <taxon>Enterobacterales</taxon>
        <taxon>Enterobacteriaceae</taxon>
        <taxon>Salmonella</taxon>
    </lineage>
</organism>
<comment type="function">
    <text evidence="1">This protein is located at the 30S-50S ribosomal subunit interface and may play a role in the structure and function of the aminoacyl-tRNA binding site.</text>
</comment>
<comment type="similarity">
    <text evidence="1">Belongs to the bacterial ribosomal protein bL19 family.</text>
</comment>
<feature type="chain" id="PRO_1000193878" description="Large ribosomal subunit protein bL19">
    <location>
        <begin position="1"/>
        <end position="115"/>
    </location>
</feature>
<gene>
    <name evidence="1" type="primary">rplS</name>
    <name type="ordered locus">SG2651</name>
</gene>
<reference key="1">
    <citation type="journal article" date="2008" name="Genome Res.">
        <title>Comparative genome analysis of Salmonella enteritidis PT4 and Salmonella gallinarum 287/91 provides insights into evolutionary and host adaptation pathways.</title>
        <authorList>
            <person name="Thomson N.R."/>
            <person name="Clayton D.J."/>
            <person name="Windhorst D."/>
            <person name="Vernikos G."/>
            <person name="Davidson S."/>
            <person name="Churcher C."/>
            <person name="Quail M.A."/>
            <person name="Stevens M."/>
            <person name="Jones M.A."/>
            <person name="Watson M."/>
            <person name="Barron A."/>
            <person name="Layton A."/>
            <person name="Pickard D."/>
            <person name="Kingsley R.A."/>
            <person name="Bignell A."/>
            <person name="Clark L."/>
            <person name="Harris B."/>
            <person name="Ormond D."/>
            <person name="Abdellah Z."/>
            <person name="Brooks K."/>
            <person name="Cherevach I."/>
            <person name="Chillingworth T."/>
            <person name="Woodward J."/>
            <person name="Norberczak H."/>
            <person name="Lord A."/>
            <person name="Arrowsmith C."/>
            <person name="Jagels K."/>
            <person name="Moule S."/>
            <person name="Mungall K."/>
            <person name="Saunders M."/>
            <person name="Whitehead S."/>
            <person name="Chabalgoity J.A."/>
            <person name="Maskell D."/>
            <person name="Humphreys T."/>
            <person name="Roberts M."/>
            <person name="Barrow P.A."/>
            <person name="Dougan G."/>
            <person name="Parkhill J."/>
        </authorList>
    </citation>
    <scope>NUCLEOTIDE SEQUENCE [LARGE SCALE GENOMIC DNA]</scope>
    <source>
        <strain>287/91 / NCTC 13346</strain>
    </source>
</reference>
<dbReference type="EMBL" id="AM933173">
    <property type="protein sequence ID" value="CAR38468.1"/>
    <property type="molecule type" value="Genomic_DNA"/>
</dbReference>
<dbReference type="RefSeq" id="WP_000065257.1">
    <property type="nucleotide sequence ID" value="NC_011274.1"/>
</dbReference>
<dbReference type="SMR" id="B5RD82"/>
<dbReference type="KEGG" id="seg:SG2651"/>
<dbReference type="HOGENOM" id="CLU_103507_2_1_6"/>
<dbReference type="Proteomes" id="UP000008321">
    <property type="component" value="Chromosome"/>
</dbReference>
<dbReference type="GO" id="GO:0022625">
    <property type="term" value="C:cytosolic large ribosomal subunit"/>
    <property type="evidence" value="ECO:0007669"/>
    <property type="project" value="TreeGrafter"/>
</dbReference>
<dbReference type="GO" id="GO:0003735">
    <property type="term" value="F:structural constituent of ribosome"/>
    <property type="evidence" value="ECO:0007669"/>
    <property type="project" value="InterPro"/>
</dbReference>
<dbReference type="GO" id="GO:0006412">
    <property type="term" value="P:translation"/>
    <property type="evidence" value="ECO:0007669"/>
    <property type="project" value="UniProtKB-UniRule"/>
</dbReference>
<dbReference type="FunFam" id="2.30.30.790:FF:000001">
    <property type="entry name" value="50S ribosomal protein L19"/>
    <property type="match status" value="1"/>
</dbReference>
<dbReference type="Gene3D" id="2.30.30.790">
    <property type="match status" value="1"/>
</dbReference>
<dbReference type="HAMAP" id="MF_00402">
    <property type="entry name" value="Ribosomal_bL19"/>
    <property type="match status" value="1"/>
</dbReference>
<dbReference type="InterPro" id="IPR001857">
    <property type="entry name" value="Ribosomal_bL19"/>
</dbReference>
<dbReference type="InterPro" id="IPR018257">
    <property type="entry name" value="Ribosomal_bL19_CS"/>
</dbReference>
<dbReference type="InterPro" id="IPR038657">
    <property type="entry name" value="Ribosomal_bL19_sf"/>
</dbReference>
<dbReference type="InterPro" id="IPR008991">
    <property type="entry name" value="Translation_prot_SH3-like_sf"/>
</dbReference>
<dbReference type="NCBIfam" id="TIGR01024">
    <property type="entry name" value="rplS_bact"/>
    <property type="match status" value="1"/>
</dbReference>
<dbReference type="PANTHER" id="PTHR15680:SF9">
    <property type="entry name" value="LARGE RIBOSOMAL SUBUNIT PROTEIN BL19M"/>
    <property type="match status" value="1"/>
</dbReference>
<dbReference type="PANTHER" id="PTHR15680">
    <property type="entry name" value="RIBOSOMAL PROTEIN L19"/>
    <property type="match status" value="1"/>
</dbReference>
<dbReference type="Pfam" id="PF01245">
    <property type="entry name" value="Ribosomal_L19"/>
    <property type="match status" value="1"/>
</dbReference>
<dbReference type="PIRSF" id="PIRSF002191">
    <property type="entry name" value="Ribosomal_L19"/>
    <property type="match status" value="1"/>
</dbReference>
<dbReference type="PRINTS" id="PR00061">
    <property type="entry name" value="RIBOSOMALL19"/>
</dbReference>
<dbReference type="SUPFAM" id="SSF50104">
    <property type="entry name" value="Translation proteins SH3-like domain"/>
    <property type="match status" value="1"/>
</dbReference>
<dbReference type="PROSITE" id="PS01015">
    <property type="entry name" value="RIBOSOMAL_L19"/>
    <property type="match status" value="1"/>
</dbReference>
<evidence type="ECO:0000255" key="1">
    <source>
        <dbReference type="HAMAP-Rule" id="MF_00402"/>
    </source>
</evidence>
<evidence type="ECO:0000305" key="2"/>
<proteinExistence type="inferred from homology"/>
<keyword id="KW-0687">Ribonucleoprotein</keyword>
<keyword id="KW-0689">Ribosomal protein</keyword>
<name>RL19_SALG2</name>
<protein>
    <recommendedName>
        <fullName evidence="1">Large ribosomal subunit protein bL19</fullName>
    </recommendedName>
    <alternativeName>
        <fullName evidence="2">50S ribosomal protein L19</fullName>
    </alternativeName>
</protein>
<accession>B5RD82</accession>